<reference key="1">
    <citation type="journal article" date="2008" name="J. Bacteriol.">
        <title>Comparative genome analysis of 'Candidatus Phytoplasma australiense' (subgroup tuf-Australia I; rp-A) and 'Ca. Phytoplasma asteris' strains OY-M and AY-WB.</title>
        <authorList>
            <person name="Tran-Nguyen L.T."/>
            <person name="Kube M."/>
            <person name="Schneider B."/>
            <person name="Reinhardt R."/>
            <person name="Gibb K.S."/>
        </authorList>
    </citation>
    <scope>NUCLEOTIDE SEQUENCE [LARGE SCALE GENOMIC DNA]</scope>
</reference>
<proteinExistence type="inferred from homology"/>
<keyword id="KW-0963">Cytoplasm</keyword>
<keyword id="KW-0342">GTP-binding</keyword>
<keyword id="KW-0378">Hydrolase</keyword>
<keyword id="KW-0479">Metal-binding</keyword>
<keyword id="KW-0547">Nucleotide-binding</keyword>
<keyword id="KW-1185">Reference proteome</keyword>
<keyword id="KW-0690">Ribosome biogenesis</keyword>
<keyword id="KW-0694">RNA-binding</keyword>
<keyword id="KW-0699">rRNA-binding</keyword>
<keyword id="KW-0862">Zinc</keyword>
<protein>
    <recommendedName>
        <fullName evidence="1">Small ribosomal subunit biogenesis GTPase RsgA</fullName>
        <ecNumber evidence="1">3.6.1.-</ecNumber>
    </recommendedName>
</protein>
<gene>
    <name evidence="1" type="primary">rsgA</name>
    <name type="ordered locus">PA0348</name>
</gene>
<sequence length="310" mass="35894">MKKALVIRFLAGIYYIQDLDNQTILKAQKKGVLKKSNFIQDNQLKNNRDKMSIKVGDIVLYGMCYDKYLIYAILPRKNELKRPNIANIDQVLLVFSLVKPHFQTLLLDKFLLILQQHKLDVILVFSKIDLIEKEELEEIQQNMNYYFPFYTCYYVDSKQQIGIGVLKNIFEQKITVLAGQTGVGKSTLLKALIPDANLKTQEISESLGRGKHTTKNAQLYLFNNGFIADTPGFSKLDLGGFSYQNLKNFYPDFLKYVDNCYFGTNCLHLQETQCGVKEALTQGKIIPSRYSNYCYFMEEIKKEKKIYVKN</sequence>
<evidence type="ECO:0000255" key="1">
    <source>
        <dbReference type="HAMAP-Rule" id="MF_01820"/>
    </source>
</evidence>
<evidence type="ECO:0000255" key="2">
    <source>
        <dbReference type="PROSITE-ProRule" id="PRU01058"/>
    </source>
</evidence>
<comment type="function">
    <text evidence="1">One of several proteins that assist in the late maturation steps of the functional core of the 30S ribosomal subunit. Helps release RbfA from mature subunits. May play a role in the assembly of ribosomal proteins into the subunit. Circularly permuted GTPase that catalyzes slow GTP hydrolysis, GTPase activity is stimulated by the 30S ribosomal subunit.</text>
</comment>
<comment type="cofactor">
    <cofactor evidence="1">
        <name>Zn(2+)</name>
        <dbReference type="ChEBI" id="CHEBI:29105"/>
    </cofactor>
    <text evidence="1">Binds 1 zinc ion per subunit.</text>
</comment>
<comment type="subunit">
    <text evidence="1">Monomer. Associates with 30S ribosomal subunit, binds 16S rRNA.</text>
</comment>
<comment type="subcellular location">
    <subcellularLocation>
        <location evidence="1">Cytoplasm</location>
    </subcellularLocation>
</comment>
<comment type="similarity">
    <text evidence="1">Belongs to the TRAFAC class YlqF/YawG GTPase family. RsgA subfamily.</text>
</comment>
<organism>
    <name type="scientific">Phytoplasma australiense</name>
    <dbReference type="NCBI Taxonomy" id="59748"/>
    <lineage>
        <taxon>Bacteria</taxon>
        <taxon>Bacillati</taxon>
        <taxon>Mycoplasmatota</taxon>
        <taxon>Mollicutes</taxon>
        <taxon>Acholeplasmatales</taxon>
        <taxon>Acholeplasmataceae</taxon>
        <taxon>Candidatus Phytoplasma</taxon>
        <taxon>16SrXII (Stolbur group)</taxon>
    </lineage>
</organism>
<name>RSGA_PHYAS</name>
<accession>B1V9R1</accession>
<dbReference type="EC" id="3.6.1.-" evidence="1"/>
<dbReference type="EMBL" id="AM422018">
    <property type="protein sequence ID" value="CAM11683.1"/>
    <property type="molecule type" value="Genomic_DNA"/>
</dbReference>
<dbReference type="SMR" id="B1V9R1"/>
<dbReference type="STRING" id="59748.PA0348"/>
<dbReference type="KEGG" id="pal:PA0348"/>
<dbReference type="eggNOG" id="COG1162">
    <property type="taxonomic scope" value="Bacteria"/>
</dbReference>
<dbReference type="Proteomes" id="UP000008323">
    <property type="component" value="Chromosome"/>
</dbReference>
<dbReference type="GO" id="GO:0005737">
    <property type="term" value="C:cytoplasm"/>
    <property type="evidence" value="ECO:0007669"/>
    <property type="project" value="UniProtKB-SubCell"/>
</dbReference>
<dbReference type="GO" id="GO:0005525">
    <property type="term" value="F:GTP binding"/>
    <property type="evidence" value="ECO:0007669"/>
    <property type="project" value="UniProtKB-UniRule"/>
</dbReference>
<dbReference type="GO" id="GO:0003924">
    <property type="term" value="F:GTPase activity"/>
    <property type="evidence" value="ECO:0007669"/>
    <property type="project" value="UniProtKB-UniRule"/>
</dbReference>
<dbReference type="GO" id="GO:0046872">
    <property type="term" value="F:metal ion binding"/>
    <property type="evidence" value="ECO:0007669"/>
    <property type="project" value="UniProtKB-KW"/>
</dbReference>
<dbReference type="GO" id="GO:0019843">
    <property type="term" value="F:rRNA binding"/>
    <property type="evidence" value="ECO:0007669"/>
    <property type="project" value="UniProtKB-KW"/>
</dbReference>
<dbReference type="GO" id="GO:0042274">
    <property type="term" value="P:ribosomal small subunit biogenesis"/>
    <property type="evidence" value="ECO:0007669"/>
    <property type="project" value="UniProtKB-UniRule"/>
</dbReference>
<dbReference type="CDD" id="cd01854">
    <property type="entry name" value="YjeQ_EngC"/>
    <property type="match status" value="1"/>
</dbReference>
<dbReference type="Gene3D" id="3.40.50.300">
    <property type="entry name" value="P-loop containing nucleotide triphosphate hydrolases"/>
    <property type="match status" value="1"/>
</dbReference>
<dbReference type="Gene3D" id="1.10.40.50">
    <property type="entry name" value="Probable gtpase engc, domain 3"/>
    <property type="match status" value="1"/>
</dbReference>
<dbReference type="HAMAP" id="MF_01820">
    <property type="entry name" value="GTPase_RsgA"/>
    <property type="match status" value="1"/>
</dbReference>
<dbReference type="InterPro" id="IPR030378">
    <property type="entry name" value="G_CP_dom"/>
</dbReference>
<dbReference type="InterPro" id="IPR027417">
    <property type="entry name" value="P-loop_NTPase"/>
</dbReference>
<dbReference type="InterPro" id="IPR004881">
    <property type="entry name" value="Ribosome_biogen_GTPase_RsgA"/>
</dbReference>
<dbReference type="InterPro" id="IPR010914">
    <property type="entry name" value="RsgA_GTPase_dom"/>
</dbReference>
<dbReference type="NCBIfam" id="TIGR00157">
    <property type="entry name" value="ribosome small subunit-dependent GTPase A"/>
    <property type="match status" value="1"/>
</dbReference>
<dbReference type="PANTHER" id="PTHR32120">
    <property type="entry name" value="SMALL RIBOSOMAL SUBUNIT BIOGENESIS GTPASE RSGA"/>
    <property type="match status" value="1"/>
</dbReference>
<dbReference type="PANTHER" id="PTHR32120:SF11">
    <property type="entry name" value="SMALL RIBOSOMAL SUBUNIT BIOGENESIS GTPASE RSGA 1, MITOCHONDRIAL-RELATED"/>
    <property type="match status" value="1"/>
</dbReference>
<dbReference type="Pfam" id="PF03193">
    <property type="entry name" value="RsgA_GTPase"/>
    <property type="match status" value="1"/>
</dbReference>
<dbReference type="SUPFAM" id="SSF52540">
    <property type="entry name" value="P-loop containing nucleoside triphosphate hydrolases"/>
    <property type="match status" value="1"/>
</dbReference>
<dbReference type="PROSITE" id="PS50936">
    <property type="entry name" value="ENGC_GTPASE"/>
    <property type="match status" value="1"/>
</dbReference>
<dbReference type="PROSITE" id="PS51721">
    <property type="entry name" value="G_CP"/>
    <property type="match status" value="1"/>
</dbReference>
<feature type="chain" id="PRO_1000216049" description="Small ribosomal subunit biogenesis GTPase RsgA">
    <location>
        <begin position="1"/>
        <end position="310"/>
    </location>
</feature>
<feature type="domain" description="CP-type G" evidence="2">
    <location>
        <begin position="77"/>
        <end position="236"/>
    </location>
</feature>
<feature type="binding site" evidence="1">
    <location>
        <begin position="126"/>
        <end position="129"/>
    </location>
    <ligand>
        <name>GTP</name>
        <dbReference type="ChEBI" id="CHEBI:37565"/>
    </ligand>
</feature>
<feature type="binding site" evidence="1">
    <location>
        <begin position="179"/>
        <end position="187"/>
    </location>
    <ligand>
        <name>GTP</name>
        <dbReference type="ChEBI" id="CHEBI:37565"/>
    </ligand>
</feature>
<feature type="binding site" evidence="1">
    <location>
        <position position="260"/>
    </location>
    <ligand>
        <name>Zn(2+)</name>
        <dbReference type="ChEBI" id="CHEBI:29105"/>
    </ligand>
</feature>
<feature type="binding site" evidence="1">
    <location>
        <position position="266"/>
    </location>
    <ligand>
        <name>Zn(2+)</name>
        <dbReference type="ChEBI" id="CHEBI:29105"/>
    </ligand>
</feature>
<feature type="binding site" evidence="1">
    <location>
        <position position="268"/>
    </location>
    <ligand>
        <name>Zn(2+)</name>
        <dbReference type="ChEBI" id="CHEBI:29105"/>
    </ligand>
</feature>
<feature type="binding site" evidence="1">
    <location>
        <position position="274"/>
    </location>
    <ligand>
        <name>Zn(2+)</name>
        <dbReference type="ChEBI" id="CHEBI:29105"/>
    </ligand>
</feature>